<reference key="1">
    <citation type="journal article" date="2003" name="Nature">
        <title>Genome divergence in two Prochlorococcus ecotypes reflects oceanic niche differentiation.</title>
        <authorList>
            <person name="Rocap G."/>
            <person name="Larimer F.W."/>
            <person name="Lamerdin J.E."/>
            <person name="Malfatti S."/>
            <person name="Chain P."/>
            <person name="Ahlgren N.A."/>
            <person name="Arellano A."/>
            <person name="Coleman M."/>
            <person name="Hauser L."/>
            <person name="Hess W.R."/>
            <person name="Johnson Z.I."/>
            <person name="Land M.L."/>
            <person name="Lindell D."/>
            <person name="Post A.F."/>
            <person name="Regala W."/>
            <person name="Shah M."/>
            <person name="Shaw S.L."/>
            <person name="Steglich C."/>
            <person name="Sullivan M.B."/>
            <person name="Ting C.S."/>
            <person name="Tolonen A."/>
            <person name="Webb E.A."/>
            <person name="Zinser E.R."/>
            <person name="Chisholm S.W."/>
        </authorList>
    </citation>
    <scope>NUCLEOTIDE SEQUENCE [LARGE SCALE GENOMIC DNA]</scope>
    <source>
        <strain>CCMP1986 / NIES-2087 / MED4</strain>
    </source>
</reference>
<dbReference type="EC" id="2.7.7.6" evidence="1"/>
<dbReference type="EMBL" id="BX548174">
    <property type="protein sequence ID" value="CAE19942.1"/>
    <property type="molecule type" value="Genomic_DNA"/>
</dbReference>
<dbReference type="RefSeq" id="WP_011133111.1">
    <property type="nucleotide sequence ID" value="NC_005072.1"/>
</dbReference>
<dbReference type="SMR" id="Q7V008"/>
<dbReference type="STRING" id="59919.PMM1483"/>
<dbReference type="KEGG" id="pmm:PMM1483"/>
<dbReference type="eggNOG" id="COG0086">
    <property type="taxonomic scope" value="Bacteria"/>
</dbReference>
<dbReference type="HOGENOM" id="CLU_000524_1_0_3"/>
<dbReference type="OrthoDB" id="9815296at2"/>
<dbReference type="Proteomes" id="UP000001026">
    <property type="component" value="Chromosome"/>
</dbReference>
<dbReference type="GO" id="GO:0000428">
    <property type="term" value="C:DNA-directed RNA polymerase complex"/>
    <property type="evidence" value="ECO:0007669"/>
    <property type="project" value="UniProtKB-KW"/>
</dbReference>
<dbReference type="GO" id="GO:0003677">
    <property type="term" value="F:DNA binding"/>
    <property type="evidence" value="ECO:0007669"/>
    <property type="project" value="UniProtKB-UniRule"/>
</dbReference>
<dbReference type="GO" id="GO:0003899">
    <property type="term" value="F:DNA-directed RNA polymerase activity"/>
    <property type="evidence" value="ECO:0007669"/>
    <property type="project" value="UniProtKB-UniRule"/>
</dbReference>
<dbReference type="GO" id="GO:0008270">
    <property type="term" value="F:zinc ion binding"/>
    <property type="evidence" value="ECO:0007669"/>
    <property type="project" value="UniProtKB-UniRule"/>
</dbReference>
<dbReference type="GO" id="GO:0006351">
    <property type="term" value="P:DNA-templated transcription"/>
    <property type="evidence" value="ECO:0007669"/>
    <property type="project" value="UniProtKB-UniRule"/>
</dbReference>
<dbReference type="CDD" id="cd02655">
    <property type="entry name" value="RNAP_beta'_C"/>
    <property type="match status" value="1"/>
</dbReference>
<dbReference type="FunFam" id="1.10.150.390:FF:000002">
    <property type="entry name" value="DNA-directed RNA polymerase subunit beta"/>
    <property type="match status" value="1"/>
</dbReference>
<dbReference type="Gene3D" id="1.10.132.30">
    <property type="match status" value="1"/>
</dbReference>
<dbReference type="Gene3D" id="1.10.150.390">
    <property type="match status" value="1"/>
</dbReference>
<dbReference type="Gene3D" id="1.10.1790.20">
    <property type="match status" value="1"/>
</dbReference>
<dbReference type="Gene3D" id="2.40.50.100">
    <property type="match status" value="1"/>
</dbReference>
<dbReference type="Gene3D" id="1.10.274.100">
    <property type="entry name" value="RNA polymerase Rpb1, domain 3"/>
    <property type="match status" value="1"/>
</dbReference>
<dbReference type="HAMAP" id="MF_01324">
    <property type="entry name" value="RNApol_bact_RpoC2"/>
    <property type="match status" value="1"/>
</dbReference>
<dbReference type="InterPro" id="IPR012756">
    <property type="entry name" value="DNA-dir_RpoC2_beta_pp"/>
</dbReference>
<dbReference type="InterPro" id="IPR045867">
    <property type="entry name" value="DNA-dir_RpoC_beta_prime"/>
</dbReference>
<dbReference type="InterPro" id="IPR007066">
    <property type="entry name" value="RNA_pol_Rpb1_3"/>
</dbReference>
<dbReference type="InterPro" id="IPR042102">
    <property type="entry name" value="RNA_pol_Rpb1_3_sf"/>
</dbReference>
<dbReference type="InterPro" id="IPR007083">
    <property type="entry name" value="RNA_pol_Rpb1_4"/>
</dbReference>
<dbReference type="InterPro" id="IPR007081">
    <property type="entry name" value="RNA_pol_Rpb1_5"/>
</dbReference>
<dbReference type="InterPro" id="IPR038120">
    <property type="entry name" value="Rpb1_funnel_sf"/>
</dbReference>
<dbReference type="NCBIfam" id="NF002724">
    <property type="entry name" value="PRK02597.1"/>
    <property type="match status" value="1"/>
</dbReference>
<dbReference type="NCBIfam" id="TIGR02388">
    <property type="entry name" value="rpoC2_cyan"/>
    <property type="match status" value="1"/>
</dbReference>
<dbReference type="PANTHER" id="PTHR19376">
    <property type="entry name" value="DNA-DIRECTED RNA POLYMERASE"/>
    <property type="match status" value="1"/>
</dbReference>
<dbReference type="Pfam" id="PF04983">
    <property type="entry name" value="RNA_pol_Rpb1_3"/>
    <property type="match status" value="1"/>
</dbReference>
<dbReference type="Pfam" id="PF05000">
    <property type="entry name" value="RNA_pol_Rpb1_4"/>
    <property type="match status" value="1"/>
</dbReference>
<dbReference type="Pfam" id="PF04998">
    <property type="entry name" value="RNA_pol_Rpb1_5"/>
    <property type="match status" value="2"/>
</dbReference>
<dbReference type="SUPFAM" id="SSF64484">
    <property type="entry name" value="beta and beta-prime subunits of DNA dependent RNA-polymerase"/>
    <property type="match status" value="1"/>
</dbReference>
<comment type="function">
    <text evidence="1">DNA-dependent RNA polymerase catalyzes the transcription of DNA into RNA using the four ribonucleoside triphosphates as substrates.</text>
</comment>
<comment type="catalytic activity">
    <reaction evidence="1">
        <text>RNA(n) + a ribonucleoside 5'-triphosphate = RNA(n+1) + diphosphate</text>
        <dbReference type="Rhea" id="RHEA:21248"/>
        <dbReference type="Rhea" id="RHEA-COMP:14527"/>
        <dbReference type="Rhea" id="RHEA-COMP:17342"/>
        <dbReference type="ChEBI" id="CHEBI:33019"/>
        <dbReference type="ChEBI" id="CHEBI:61557"/>
        <dbReference type="ChEBI" id="CHEBI:140395"/>
        <dbReference type="EC" id="2.7.7.6"/>
    </reaction>
</comment>
<comment type="cofactor">
    <cofactor evidence="1">
        <name>Zn(2+)</name>
        <dbReference type="ChEBI" id="CHEBI:29105"/>
    </cofactor>
    <text evidence="1">Binds 1 Zn(2+) ion per subunit.</text>
</comment>
<comment type="subunit">
    <text evidence="1">In cyanobacteria the RNAP catalytic core is composed of 2 alpha, 1 beta, 1 beta', 1 gamma and 1 omega subunit. When a sigma factor is associated with the core the holoenzyme is formed, which can initiate transcription.</text>
</comment>
<comment type="similarity">
    <text evidence="1">Belongs to the RNA polymerase beta' chain family. RpoC2 subfamily.</text>
</comment>
<feature type="chain" id="PRO_0000067907" description="DNA-directed RNA polymerase subunit beta'">
    <location>
        <begin position="1"/>
        <end position="1366"/>
    </location>
</feature>
<feature type="region of interest" description="Disordered" evidence="2">
    <location>
        <begin position="1"/>
        <end position="37"/>
    </location>
</feature>
<feature type="region of interest" description="Disordered" evidence="2">
    <location>
        <begin position="1304"/>
        <end position="1366"/>
    </location>
</feature>
<feature type="compositionally biased region" description="Basic residues" evidence="2">
    <location>
        <begin position="1"/>
        <end position="23"/>
    </location>
</feature>
<feature type="compositionally biased region" description="Low complexity" evidence="2">
    <location>
        <begin position="1354"/>
        <end position="1366"/>
    </location>
</feature>
<feature type="binding site" evidence="1">
    <location>
        <position position="248"/>
    </location>
    <ligand>
        <name>Zn(2+)</name>
        <dbReference type="ChEBI" id="CHEBI:29105"/>
    </ligand>
</feature>
<feature type="binding site" evidence="1">
    <location>
        <position position="315"/>
    </location>
    <ligand>
        <name>Zn(2+)</name>
        <dbReference type="ChEBI" id="CHEBI:29105"/>
    </ligand>
</feature>
<feature type="binding site" evidence="1">
    <location>
        <position position="322"/>
    </location>
    <ligand>
        <name>Zn(2+)</name>
        <dbReference type="ChEBI" id="CHEBI:29105"/>
    </ligand>
</feature>
<feature type="binding site" evidence="1">
    <location>
        <position position="325"/>
    </location>
    <ligand>
        <name>Zn(2+)</name>
        <dbReference type="ChEBI" id="CHEBI:29105"/>
    </ligand>
</feature>
<keyword id="KW-0240">DNA-directed RNA polymerase</keyword>
<keyword id="KW-0479">Metal-binding</keyword>
<keyword id="KW-0548">Nucleotidyltransferase</keyword>
<keyword id="KW-0804">Transcription</keyword>
<keyword id="KW-0808">Transferase</keyword>
<keyword id="KW-0862">Zinc</keyword>
<protein>
    <recommendedName>
        <fullName evidence="1">DNA-directed RNA polymerase subunit beta'</fullName>
        <shortName evidence="1">RNAP subunit beta'</shortName>
        <ecNumber evidence="1">2.7.7.6</ecNumber>
    </recommendedName>
    <alternativeName>
        <fullName evidence="1">RNA polymerase subunit beta'</fullName>
    </alternativeName>
    <alternativeName>
        <fullName evidence="1">Transcriptase subunit beta'</fullName>
    </alternativeName>
</protein>
<name>RPOC2_PROMP</name>
<gene>
    <name evidence="1" type="primary">rpoC2</name>
    <name type="ordered locus">PMM1483</name>
</gene>
<proteinExistence type="inferred from homology"/>
<evidence type="ECO:0000255" key="1">
    <source>
        <dbReference type="HAMAP-Rule" id="MF_01324"/>
    </source>
</evidence>
<evidence type="ECO:0000256" key="2">
    <source>
        <dbReference type="SAM" id="MobiDB-lite"/>
    </source>
</evidence>
<accession>Q7V008</accession>
<sequence length="1366" mass="149637">MTSSKPKKSSRVRKTTKNSKKNHNTMMPLLPKTPPSFKNKVVDKKALKNLVSWAYKTHGTAVTAAMADNLKDLGFKYATQAAVSISVNDLKVPEAKQDLIGQAEAQITATEECYRLGEITEVERHTKVIDTWTETNERLVDAVKNNFNQNDPLNSVWMMANSGARGNMSQVRQLVGMRGLMANPQGEIIDLPIRTNFREGLTVTEYVISSYGARKGLVDTALRTADSGYLTRRLVDVAQDVIVREEDCGTERSIVINSEDGKFGSRLIGRLSAEDILDSEGNLIVPKNTAIDPSLSKTLETSLISKVNIRSPLTCEANRSVCRKCYGWALAHNHLVDLGEAVGIIAAQSIGEPGTQLTMRTFHTGGVSTAESGVVRSKIKGKVEFGSKAKIRGYRTPHGVEAKQAEVDFLLKIIPTGSITNKAQKIEVTSGSLLFVEDGQDIDSDITVAQITSGAVKKSVEKATKDVICDLAGEVRYDKVIQPKEVTDRQGNITLKAQRLGRLWVLAGDVYNLPPNAKPVVSTETKVEQGTVLAEASQSSEFGGEVRLRESVGDSREVQIVTTSMLLSNFKLIEESTHSGELFHLESNDGTIYRLNTSPGSKISSGEVIADLADERFRTKTGGLVKYAPGLSVKKARSSKNGFEVSQGGTLLWIPQETHEINKDISLLMTEDMEWIEAGTEVVKDIFSQTSGIVTVTQKNDILREITVRNGSFHECEDEEILSRFTEEGKLVNPGEKIIDGVDNDEILFVQKLETSKGKGLLLRTVEEYTIPNEAELPELSHVKQEKGPSLALKAIQRLSYKDGELIKSVEGVELLKTNLSIESFDATPQMTIDVETIQDKSDKSINRLNLVILESILVRRDTISDSSHGSTHTELQINNNQLVKAGDVIATTQILCKERGVLQLPDSVEGEPIRRLIVERNEDKIKINIKDKAVVKTGDRVVDGDLISKGVKSTSCGEIEEVSSEYVILRIGRPYMVSPDSVLHVKDGDLVLRGDGLALLVFERQKTGDIVQGLPRIEELLEARRPRDSSILCKKSGVVQIKEGTDEESVSLSVIERDDSISEYQLLMGQNIMVSDGQQVTGGELLTDGPINPHDLLDCLFTDLKDQKPLMEAAQESISKLQRKMVNEVQNVYKSQGVAISDKHIEVIVRQMTSKVRIEDAGDTTLLPGELIELRQVEDTNQAMSITGGAPAEFTPVLLGITKASLNTDSFISAASFQETTRVLTEAAIEGKSDWLRGLKENVIIGRLIPAGTGFSGFVEELASEAGPHPDILAEESGGYRRTQNLRPDYTVDMPQTPIVSSTAILDDPSDEDLETTRNRHGIDPTSSNFAAFARPNAENQFSEDQLPDPAALEGLQEEGLLSDG</sequence>
<organism>
    <name type="scientific">Prochlorococcus marinus subsp. pastoris (strain CCMP1986 / NIES-2087 / MED4)</name>
    <dbReference type="NCBI Taxonomy" id="59919"/>
    <lineage>
        <taxon>Bacteria</taxon>
        <taxon>Bacillati</taxon>
        <taxon>Cyanobacteriota</taxon>
        <taxon>Cyanophyceae</taxon>
        <taxon>Synechococcales</taxon>
        <taxon>Prochlorococcaceae</taxon>
        <taxon>Prochlorococcus</taxon>
    </lineage>
</organism>